<name>SYFB_CLOAB</name>
<organism>
    <name type="scientific">Clostridium acetobutylicum (strain ATCC 824 / DSM 792 / JCM 1419 / IAM 19013 / LMG 5710 / NBRC 13948 / NRRL B-527 / VKM B-1787 / 2291 / W)</name>
    <dbReference type="NCBI Taxonomy" id="272562"/>
    <lineage>
        <taxon>Bacteria</taxon>
        <taxon>Bacillati</taxon>
        <taxon>Bacillota</taxon>
        <taxon>Clostridia</taxon>
        <taxon>Eubacteriales</taxon>
        <taxon>Clostridiaceae</taxon>
        <taxon>Clostridium</taxon>
    </lineage>
</organism>
<proteinExistence type="inferred from homology"/>
<feature type="chain" id="PRO_0000126870" description="Phenylalanine--tRNA ligase beta subunit">
    <location>
        <begin position="1"/>
        <end position="792"/>
    </location>
</feature>
<feature type="domain" description="tRNA-binding" evidence="1">
    <location>
        <begin position="39"/>
        <end position="150"/>
    </location>
</feature>
<feature type="domain" description="B5" evidence="1">
    <location>
        <begin position="404"/>
        <end position="479"/>
    </location>
</feature>
<feature type="domain" description="FDX-ACB" evidence="1">
    <location>
        <begin position="699"/>
        <end position="792"/>
    </location>
</feature>
<feature type="binding site" evidence="1">
    <location>
        <position position="457"/>
    </location>
    <ligand>
        <name>Mg(2+)</name>
        <dbReference type="ChEBI" id="CHEBI:18420"/>
        <note>shared with alpha subunit</note>
    </ligand>
</feature>
<feature type="binding site" evidence="1">
    <location>
        <position position="463"/>
    </location>
    <ligand>
        <name>Mg(2+)</name>
        <dbReference type="ChEBI" id="CHEBI:18420"/>
        <note>shared with alpha subunit</note>
    </ligand>
</feature>
<feature type="binding site" evidence="1">
    <location>
        <position position="466"/>
    </location>
    <ligand>
        <name>Mg(2+)</name>
        <dbReference type="ChEBI" id="CHEBI:18420"/>
        <note>shared with alpha subunit</note>
    </ligand>
</feature>
<feature type="binding site" evidence="1">
    <location>
        <position position="467"/>
    </location>
    <ligand>
        <name>Mg(2+)</name>
        <dbReference type="ChEBI" id="CHEBI:18420"/>
        <note>shared with alpha subunit</note>
    </ligand>
</feature>
<evidence type="ECO:0000255" key="1">
    <source>
        <dbReference type="HAMAP-Rule" id="MF_00283"/>
    </source>
</evidence>
<gene>
    <name evidence="1" type="primary">pheT</name>
    <name type="ordered locus">CA_C2356</name>
</gene>
<sequence>MKVPVKWLKDYVDFDINAKELGDRLTLSGSKVEEIITSGDEITNVVTGKILKIDPHPDAEKLVICSVDVGKNEPIQIVTGAQNMKENDIVPVALHGSTLPGGVKIKKGKLRGVVSNGMMCAKEELGIADEEHVHGLMILDENTPIGKDIKEVLGLDNPVIDFEITSNRPDCLSVIGIARETAATINTKYRNVKIDFSETKGRNIKEELEVEVKDKLCRRYMARVIKNVKIEDSPAWMQERLMLAGVRPINNIVDITNFVMLEVGQPMHAFDKKMITSNKIVIERAKDGEKFTTLDSEERSLDSNVLMIKDGDKNCAIAGIMGGLDSEVAENTHEIIFESANFDGTNIRVSSQKLALRTEASGRYEKDLDPNLAEIALNRACTLIQELNAGEIVEGVIDIYPVKSEPNIVEVDYNWINNFLGIKISKEEMKEYLDRLELTTEIKGDKLEVFSPTFRCDINIKEDVAEEVARIYGYNKVPSTTVKSQSIRTGKSKIQQIKDVVTDILISSGLNESINYSFVSPKIFDKILVPEDSELRNVVKIRNPLGEDFSVMRTTTLHSMMESLARNYSHNNELAKLFEIGKVYIPSENEGEIPKERNVITIGMYGNVDYFDLKGVVENLVEILGVNKISYARESENPTFHPGKTAVIKIKNTVLGTLGEVHPDVCENYEVEERCYVAEIDLDLLLENVSLSRKYKALPKFPTVTRDISVLVDEDILVQEIENVIKRQGGTILESLNLFDVYKGKQVPQGKKSVSYALTYRDENKTLTDKDVEKIQNKVIKTLEHVLGAELR</sequence>
<protein>
    <recommendedName>
        <fullName evidence="1">Phenylalanine--tRNA ligase beta subunit</fullName>
        <ecNumber evidence="1">6.1.1.20</ecNumber>
    </recommendedName>
    <alternativeName>
        <fullName evidence="1">Phenylalanyl-tRNA synthetase beta subunit</fullName>
        <shortName evidence="1">PheRS</shortName>
    </alternativeName>
</protein>
<dbReference type="EC" id="6.1.1.20" evidence="1"/>
<dbReference type="EMBL" id="AE001437">
    <property type="protein sequence ID" value="AAK80312.1"/>
    <property type="molecule type" value="Genomic_DNA"/>
</dbReference>
<dbReference type="PIR" id="E97190">
    <property type="entry name" value="E97190"/>
</dbReference>
<dbReference type="RefSeq" id="NP_348972.1">
    <property type="nucleotide sequence ID" value="NC_003030.1"/>
</dbReference>
<dbReference type="RefSeq" id="WP_010965653.1">
    <property type="nucleotide sequence ID" value="NC_003030.1"/>
</dbReference>
<dbReference type="SMR" id="Q97GL0"/>
<dbReference type="STRING" id="272562.CA_C2356"/>
<dbReference type="GeneID" id="44998831"/>
<dbReference type="KEGG" id="cac:CA_C2356"/>
<dbReference type="PATRIC" id="fig|272562.8.peg.2552"/>
<dbReference type="eggNOG" id="COG0072">
    <property type="taxonomic scope" value="Bacteria"/>
</dbReference>
<dbReference type="eggNOG" id="COG0073">
    <property type="taxonomic scope" value="Bacteria"/>
</dbReference>
<dbReference type="HOGENOM" id="CLU_016891_0_0_9"/>
<dbReference type="OrthoDB" id="9805455at2"/>
<dbReference type="Proteomes" id="UP000000814">
    <property type="component" value="Chromosome"/>
</dbReference>
<dbReference type="GO" id="GO:0009328">
    <property type="term" value="C:phenylalanine-tRNA ligase complex"/>
    <property type="evidence" value="ECO:0007669"/>
    <property type="project" value="TreeGrafter"/>
</dbReference>
<dbReference type="GO" id="GO:0005524">
    <property type="term" value="F:ATP binding"/>
    <property type="evidence" value="ECO:0007669"/>
    <property type="project" value="UniProtKB-UniRule"/>
</dbReference>
<dbReference type="GO" id="GO:0140096">
    <property type="term" value="F:catalytic activity, acting on a protein"/>
    <property type="evidence" value="ECO:0007669"/>
    <property type="project" value="UniProtKB-ARBA"/>
</dbReference>
<dbReference type="GO" id="GO:0000287">
    <property type="term" value="F:magnesium ion binding"/>
    <property type="evidence" value="ECO:0007669"/>
    <property type="project" value="UniProtKB-UniRule"/>
</dbReference>
<dbReference type="GO" id="GO:0004826">
    <property type="term" value="F:phenylalanine-tRNA ligase activity"/>
    <property type="evidence" value="ECO:0007669"/>
    <property type="project" value="UniProtKB-UniRule"/>
</dbReference>
<dbReference type="GO" id="GO:0016740">
    <property type="term" value="F:transferase activity"/>
    <property type="evidence" value="ECO:0007669"/>
    <property type="project" value="UniProtKB-ARBA"/>
</dbReference>
<dbReference type="GO" id="GO:0000049">
    <property type="term" value="F:tRNA binding"/>
    <property type="evidence" value="ECO:0007669"/>
    <property type="project" value="UniProtKB-KW"/>
</dbReference>
<dbReference type="GO" id="GO:0006432">
    <property type="term" value="P:phenylalanyl-tRNA aminoacylation"/>
    <property type="evidence" value="ECO:0007669"/>
    <property type="project" value="UniProtKB-UniRule"/>
</dbReference>
<dbReference type="CDD" id="cd00769">
    <property type="entry name" value="PheRS_beta_core"/>
    <property type="match status" value="1"/>
</dbReference>
<dbReference type="CDD" id="cd02796">
    <property type="entry name" value="tRNA_bind_bactPheRS"/>
    <property type="match status" value="1"/>
</dbReference>
<dbReference type="FunFam" id="2.40.50.140:FF:000045">
    <property type="entry name" value="Phenylalanine--tRNA ligase beta subunit"/>
    <property type="match status" value="1"/>
</dbReference>
<dbReference type="FunFam" id="3.30.56.10:FF:000002">
    <property type="entry name" value="Phenylalanine--tRNA ligase beta subunit"/>
    <property type="match status" value="1"/>
</dbReference>
<dbReference type="FunFam" id="3.30.70.380:FF:000001">
    <property type="entry name" value="Phenylalanine--tRNA ligase beta subunit"/>
    <property type="match status" value="1"/>
</dbReference>
<dbReference type="FunFam" id="3.50.40.10:FF:000001">
    <property type="entry name" value="Phenylalanine--tRNA ligase beta subunit"/>
    <property type="match status" value="1"/>
</dbReference>
<dbReference type="Gene3D" id="3.30.56.10">
    <property type="match status" value="2"/>
</dbReference>
<dbReference type="Gene3D" id="3.30.930.10">
    <property type="entry name" value="Bira Bifunctional Protein, Domain 2"/>
    <property type="match status" value="1"/>
</dbReference>
<dbReference type="Gene3D" id="3.30.70.380">
    <property type="entry name" value="Ferrodoxin-fold anticodon-binding domain"/>
    <property type="match status" value="1"/>
</dbReference>
<dbReference type="Gene3D" id="2.40.50.140">
    <property type="entry name" value="Nucleic acid-binding proteins"/>
    <property type="match status" value="1"/>
</dbReference>
<dbReference type="Gene3D" id="3.50.40.10">
    <property type="entry name" value="Phenylalanyl-trna Synthetase, Chain B, domain 3"/>
    <property type="match status" value="1"/>
</dbReference>
<dbReference type="HAMAP" id="MF_00283">
    <property type="entry name" value="Phe_tRNA_synth_beta1"/>
    <property type="match status" value="1"/>
</dbReference>
<dbReference type="InterPro" id="IPR045864">
    <property type="entry name" value="aa-tRNA-synth_II/BPL/LPL"/>
</dbReference>
<dbReference type="InterPro" id="IPR005146">
    <property type="entry name" value="B3/B4_tRNA-bd"/>
</dbReference>
<dbReference type="InterPro" id="IPR009061">
    <property type="entry name" value="DNA-bd_dom_put_sf"/>
</dbReference>
<dbReference type="InterPro" id="IPR005121">
    <property type="entry name" value="Fdx_antiC-bd"/>
</dbReference>
<dbReference type="InterPro" id="IPR036690">
    <property type="entry name" value="Fdx_antiC-bd_sf"/>
</dbReference>
<dbReference type="InterPro" id="IPR012340">
    <property type="entry name" value="NA-bd_OB-fold"/>
</dbReference>
<dbReference type="InterPro" id="IPR045060">
    <property type="entry name" value="Phe-tRNA-ligase_IIc_bsu"/>
</dbReference>
<dbReference type="InterPro" id="IPR004532">
    <property type="entry name" value="Phe-tRNA-ligase_IIc_bsu_bact"/>
</dbReference>
<dbReference type="InterPro" id="IPR020825">
    <property type="entry name" value="Phe-tRNA_synthase-like_B3/B4"/>
</dbReference>
<dbReference type="InterPro" id="IPR041616">
    <property type="entry name" value="PheRS_beta_core"/>
</dbReference>
<dbReference type="InterPro" id="IPR002547">
    <property type="entry name" value="tRNA-bd_dom"/>
</dbReference>
<dbReference type="InterPro" id="IPR033714">
    <property type="entry name" value="tRNA_bind_bactPheRS"/>
</dbReference>
<dbReference type="InterPro" id="IPR005147">
    <property type="entry name" value="tRNA_synthase_B5-dom"/>
</dbReference>
<dbReference type="NCBIfam" id="TIGR00472">
    <property type="entry name" value="pheT_bact"/>
    <property type="match status" value="1"/>
</dbReference>
<dbReference type="NCBIfam" id="NF045760">
    <property type="entry name" value="YtpR"/>
    <property type="match status" value="1"/>
</dbReference>
<dbReference type="PANTHER" id="PTHR10947:SF0">
    <property type="entry name" value="PHENYLALANINE--TRNA LIGASE BETA SUBUNIT"/>
    <property type="match status" value="1"/>
</dbReference>
<dbReference type="PANTHER" id="PTHR10947">
    <property type="entry name" value="PHENYLALANYL-TRNA SYNTHETASE BETA CHAIN AND LEUCINE-RICH REPEAT-CONTAINING PROTEIN 47"/>
    <property type="match status" value="1"/>
</dbReference>
<dbReference type="Pfam" id="PF03483">
    <property type="entry name" value="B3_4"/>
    <property type="match status" value="1"/>
</dbReference>
<dbReference type="Pfam" id="PF03484">
    <property type="entry name" value="B5"/>
    <property type="match status" value="1"/>
</dbReference>
<dbReference type="Pfam" id="PF03147">
    <property type="entry name" value="FDX-ACB"/>
    <property type="match status" value="1"/>
</dbReference>
<dbReference type="Pfam" id="PF01588">
    <property type="entry name" value="tRNA_bind"/>
    <property type="match status" value="1"/>
</dbReference>
<dbReference type="Pfam" id="PF17759">
    <property type="entry name" value="tRNA_synthFbeta"/>
    <property type="match status" value="1"/>
</dbReference>
<dbReference type="SMART" id="SM00873">
    <property type="entry name" value="B3_4"/>
    <property type="match status" value="1"/>
</dbReference>
<dbReference type="SMART" id="SM00874">
    <property type="entry name" value="B5"/>
    <property type="match status" value="1"/>
</dbReference>
<dbReference type="SMART" id="SM00896">
    <property type="entry name" value="FDX-ACB"/>
    <property type="match status" value="1"/>
</dbReference>
<dbReference type="SUPFAM" id="SSF54991">
    <property type="entry name" value="Anticodon-binding domain of PheRS"/>
    <property type="match status" value="1"/>
</dbReference>
<dbReference type="SUPFAM" id="SSF55681">
    <property type="entry name" value="Class II aaRS and biotin synthetases"/>
    <property type="match status" value="1"/>
</dbReference>
<dbReference type="SUPFAM" id="SSF50249">
    <property type="entry name" value="Nucleic acid-binding proteins"/>
    <property type="match status" value="1"/>
</dbReference>
<dbReference type="SUPFAM" id="SSF56037">
    <property type="entry name" value="PheT/TilS domain"/>
    <property type="match status" value="1"/>
</dbReference>
<dbReference type="SUPFAM" id="SSF46955">
    <property type="entry name" value="Putative DNA-binding domain"/>
    <property type="match status" value="1"/>
</dbReference>
<dbReference type="PROSITE" id="PS51483">
    <property type="entry name" value="B5"/>
    <property type="match status" value="1"/>
</dbReference>
<dbReference type="PROSITE" id="PS51447">
    <property type="entry name" value="FDX_ACB"/>
    <property type="match status" value="1"/>
</dbReference>
<dbReference type="PROSITE" id="PS50886">
    <property type="entry name" value="TRBD"/>
    <property type="match status" value="1"/>
</dbReference>
<keyword id="KW-0030">Aminoacyl-tRNA synthetase</keyword>
<keyword id="KW-0067">ATP-binding</keyword>
<keyword id="KW-0963">Cytoplasm</keyword>
<keyword id="KW-0436">Ligase</keyword>
<keyword id="KW-0460">Magnesium</keyword>
<keyword id="KW-0479">Metal-binding</keyword>
<keyword id="KW-0547">Nucleotide-binding</keyword>
<keyword id="KW-0648">Protein biosynthesis</keyword>
<keyword id="KW-1185">Reference proteome</keyword>
<keyword id="KW-0694">RNA-binding</keyword>
<keyword id="KW-0820">tRNA-binding</keyword>
<accession>Q97GL0</accession>
<comment type="catalytic activity">
    <reaction evidence="1">
        <text>tRNA(Phe) + L-phenylalanine + ATP = L-phenylalanyl-tRNA(Phe) + AMP + diphosphate + H(+)</text>
        <dbReference type="Rhea" id="RHEA:19413"/>
        <dbReference type="Rhea" id="RHEA-COMP:9668"/>
        <dbReference type="Rhea" id="RHEA-COMP:9699"/>
        <dbReference type="ChEBI" id="CHEBI:15378"/>
        <dbReference type="ChEBI" id="CHEBI:30616"/>
        <dbReference type="ChEBI" id="CHEBI:33019"/>
        <dbReference type="ChEBI" id="CHEBI:58095"/>
        <dbReference type="ChEBI" id="CHEBI:78442"/>
        <dbReference type="ChEBI" id="CHEBI:78531"/>
        <dbReference type="ChEBI" id="CHEBI:456215"/>
        <dbReference type="EC" id="6.1.1.20"/>
    </reaction>
</comment>
<comment type="cofactor">
    <cofactor evidence="1">
        <name>Mg(2+)</name>
        <dbReference type="ChEBI" id="CHEBI:18420"/>
    </cofactor>
    <text evidence="1">Binds 2 magnesium ions per tetramer.</text>
</comment>
<comment type="subunit">
    <text evidence="1">Tetramer of two alpha and two beta subunits.</text>
</comment>
<comment type="subcellular location">
    <subcellularLocation>
        <location evidence="1">Cytoplasm</location>
    </subcellularLocation>
</comment>
<comment type="similarity">
    <text evidence="1">Belongs to the phenylalanyl-tRNA synthetase beta subunit family. Type 1 subfamily.</text>
</comment>
<reference key="1">
    <citation type="journal article" date="2001" name="J. Bacteriol.">
        <title>Genome sequence and comparative analysis of the solvent-producing bacterium Clostridium acetobutylicum.</title>
        <authorList>
            <person name="Noelling J."/>
            <person name="Breton G."/>
            <person name="Omelchenko M.V."/>
            <person name="Makarova K.S."/>
            <person name="Zeng Q."/>
            <person name="Gibson R."/>
            <person name="Lee H.M."/>
            <person name="Dubois J."/>
            <person name="Qiu D."/>
            <person name="Hitti J."/>
            <person name="Wolf Y.I."/>
            <person name="Tatusov R.L."/>
            <person name="Sabathe F."/>
            <person name="Doucette-Stamm L.A."/>
            <person name="Soucaille P."/>
            <person name="Daly M.J."/>
            <person name="Bennett G.N."/>
            <person name="Koonin E.V."/>
            <person name="Smith D.R."/>
        </authorList>
    </citation>
    <scope>NUCLEOTIDE SEQUENCE [LARGE SCALE GENOMIC DNA]</scope>
    <source>
        <strain>ATCC 824 / DSM 792 / JCM 1419 / IAM 19013 / LMG 5710 / NBRC 13948 / NRRL B-527 / VKM B-1787 / 2291 / W</strain>
    </source>
</reference>